<feature type="chain" id="PRO_1000093500" description="Peptide chain release factor 1">
    <location>
        <begin position="1"/>
        <end position="360"/>
    </location>
</feature>
<feature type="region of interest" description="Disordered" evidence="2">
    <location>
        <begin position="284"/>
        <end position="313"/>
    </location>
</feature>
<feature type="modified residue" description="N5-methylglutamine" evidence="1">
    <location>
        <position position="235"/>
    </location>
</feature>
<sequence>MKPSIVAKLEALHERHEEVQALLGDAGIIADQDRFRALSREYAQLSDVSRCFTDWQQVQDDIETAQMMLDDPEMREMAQEELREAKEKSEQLEQQLQVLLLPKDPDDERNAFLEVRAGTGGDEAALFAGDLFRMYSRYAEARRWRVEIMSMSEGEHGGYKEIIAKISGDGVYGRLKFESGGHRVQRVPATESQGRIHTSACTVAVMPELPEAELPDINPADLRIDTFRSSGAGGQHVNTTDSAIRITHLPTGIVVECQDERSQHKNKAKALSVLGARIHAAETAKRQQAEASTRRNLLGSGDRSDRNRTYNFPQGRVTDHRINLTLYRLDETMEGKLDMLIEPIVQEHQADLLAALSEQE</sequence>
<organism>
    <name type="scientific">Salmonella heidelberg (strain SL476)</name>
    <dbReference type="NCBI Taxonomy" id="454169"/>
    <lineage>
        <taxon>Bacteria</taxon>
        <taxon>Pseudomonadati</taxon>
        <taxon>Pseudomonadota</taxon>
        <taxon>Gammaproteobacteria</taxon>
        <taxon>Enterobacterales</taxon>
        <taxon>Enterobacteriaceae</taxon>
        <taxon>Salmonella</taxon>
    </lineage>
</organism>
<accession>B4TKA4</accession>
<proteinExistence type="inferred from homology"/>
<evidence type="ECO:0000255" key="1">
    <source>
        <dbReference type="HAMAP-Rule" id="MF_00093"/>
    </source>
</evidence>
<evidence type="ECO:0000256" key="2">
    <source>
        <dbReference type="SAM" id="MobiDB-lite"/>
    </source>
</evidence>
<dbReference type="EMBL" id="CP001120">
    <property type="protein sequence ID" value="ACF66893.1"/>
    <property type="molecule type" value="Genomic_DNA"/>
</dbReference>
<dbReference type="RefSeq" id="WP_000804703.1">
    <property type="nucleotide sequence ID" value="NC_011083.1"/>
</dbReference>
<dbReference type="SMR" id="B4TKA4"/>
<dbReference type="KEGG" id="seh:SeHA_C1971"/>
<dbReference type="HOGENOM" id="CLU_036856_0_1_6"/>
<dbReference type="Proteomes" id="UP000001866">
    <property type="component" value="Chromosome"/>
</dbReference>
<dbReference type="GO" id="GO:0005737">
    <property type="term" value="C:cytoplasm"/>
    <property type="evidence" value="ECO:0007669"/>
    <property type="project" value="UniProtKB-SubCell"/>
</dbReference>
<dbReference type="GO" id="GO:0016149">
    <property type="term" value="F:translation release factor activity, codon specific"/>
    <property type="evidence" value="ECO:0007669"/>
    <property type="project" value="UniProtKB-UniRule"/>
</dbReference>
<dbReference type="FunFam" id="3.30.160.20:FF:000004">
    <property type="entry name" value="Peptide chain release factor 1"/>
    <property type="match status" value="1"/>
</dbReference>
<dbReference type="FunFam" id="3.30.70.1660:FF:000002">
    <property type="entry name" value="Peptide chain release factor 1"/>
    <property type="match status" value="1"/>
</dbReference>
<dbReference type="FunFam" id="3.30.70.1660:FF:000004">
    <property type="entry name" value="Peptide chain release factor 1"/>
    <property type="match status" value="1"/>
</dbReference>
<dbReference type="Gene3D" id="3.30.160.20">
    <property type="match status" value="1"/>
</dbReference>
<dbReference type="Gene3D" id="3.30.70.1660">
    <property type="match status" value="2"/>
</dbReference>
<dbReference type="Gene3D" id="6.10.140.1950">
    <property type="match status" value="1"/>
</dbReference>
<dbReference type="HAMAP" id="MF_00093">
    <property type="entry name" value="Rel_fac_1"/>
    <property type="match status" value="1"/>
</dbReference>
<dbReference type="InterPro" id="IPR005139">
    <property type="entry name" value="PCRF"/>
</dbReference>
<dbReference type="InterPro" id="IPR000352">
    <property type="entry name" value="Pep_chain_release_fac_I"/>
</dbReference>
<dbReference type="InterPro" id="IPR045853">
    <property type="entry name" value="Pep_chain_release_fac_I_sf"/>
</dbReference>
<dbReference type="InterPro" id="IPR050057">
    <property type="entry name" value="Prokaryotic/Mito_RF"/>
</dbReference>
<dbReference type="InterPro" id="IPR004373">
    <property type="entry name" value="RF-1"/>
</dbReference>
<dbReference type="NCBIfam" id="TIGR00019">
    <property type="entry name" value="prfA"/>
    <property type="match status" value="1"/>
</dbReference>
<dbReference type="NCBIfam" id="NF001859">
    <property type="entry name" value="PRK00591.1"/>
    <property type="match status" value="1"/>
</dbReference>
<dbReference type="PANTHER" id="PTHR43804">
    <property type="entry name" value="LD18447P"/>
    <property type="match status" value="1"/>
</dbReference>
<dbReference type="PANTHER" id="PTHR43804:SF7">
    <property type="entry name" value="LD18447P"/>
    <property type="match status" value="1"/>
</dbReference>
<dbReference type="Pfam" id="PF03462">
    <property type="entry name" value="PCRF"/>
    <property type="match status" value="1"/>
</dbReference>
<dbReference type="Pfam" id="PF00472">
    <property type="entry name" value="RF-1"/>
    <property type="match status" value="1"/>
</dbReference>
<dbReference type="SMART" id="SM00937">
    <property type="entry name" value="PCRF"/>
    <property type="match status" value="1"/>
</dbReference>
<dbReference type="SUPFAM" id="SSF75620">
    <property type="entry name" value="Release factor"/>
    <property type="match status" value="1"/>
</dbReference>
<dbReference type="PROSITE" id="PS00745">
    <property type="entry name" value="RF_PROK_I"/>
    <property type="match status" value="1"/>
</dbReference>
<protein>
    <recommendedName>
        <fullName evidence="1">Peptide chain release factor 1</fullName>
        <shortName evidence="1">RF-1</shortName>
    </recommendedName>
</protein>
<keyword id="KW-0963">Cytoplasm</keyword>
<keyword id="KW-0488">Methylation</keyword>
<keyword id="KW-0648">Protein biosynthesis</keyword>
<reference key="1">
    <citation type="journal article" date="2011" name="J. Bacteriol.">
        <title>Comparative genomics of 28 Salmonella enterica isolates: evidence for CRISPR-mediated adaptive sublineage evolution.</title>
        <authorList>
            <person name="Fricke W.F."/>
            <person name="Mammel M.K."/>
            <person name="McDermott P.F."/>
            <person name="Tartera C."/>
            <person name="White D.G."/>
            <person name="Leclerc J.E."/>
            <person name="Ravel J."/>
            <person name="Cebula T.A."/>
        </authorList>
    </citation>
    <scope>NUCLEOTIDE SEQUENCE [LARGE SCALE GENOMIC DNA]</scope>
    <source>
        <strain>SL476</strain>
    </source>
</reference>
<name>RF1_SALHS</name>
<comment type="function">
    <text evidence="1">Peptide chain release factor 1 directs the termination of translation in response to the peptide chain termination codons UAG and UAA.</text>
</comment>
<comment type="subcellular location">
    <subcellularLocation>
        <location evidence="1">Cytoplasm</location>
    </subcellularLocation>
</comment>
<comment type="PTM">
    <text evidence="1">Methylated by PrmC. Methylation increases the termination efficiency of RF1.</text>
</comment>
<comment type="similarity">
    <text evidence="1">Belongs to the prokaryotic/mitochondrial release factor family.</text>
</comment>
<gene>
    <name evidence="1" type="primary">prfA</name>
    <name type="ordered locus">SeHA_C1971</name>
</gene>